<protein>
    <recommendedName>
        <fullName>Capsular polysaccharide phosphotransferase CpsJ</fullName>
        <ecNumber>2.7.-.-</ecNumber>
    </recommendedName>
    <alternativeName>
        <fullName>Stealth protein CpsJ</fullName>
    </alternativeName>
</protein>
<name>CPSJ_STRTR</name>
<keyword id="KW-0270">Exopolysaccharide synthesis</keyword>
<keyword id="KW-0808">Transferase</keyword>
<feature type="chain" id="PRO_0000235972" description="Capsular polysaccharide phosphotransferase CpsJ">
    <location>
        <begin position="1"/>
        <end position="238"/>
    </location>
</feature>
<evidence type="ECO:0000305" key="1"/>
<reference key="1">
    <citation type="journal article" date="2000" name="Microbiology">
        <title>The complete cps gene cluster from Streptococcus thermophilus NCFB 2393 involved in the biosynthesis of a new exopolysaccharide.</title>
        <authorList>
            <person name="Almiron-Roig E."/>
            <person name="Mulholland F."/>
            <person name="Gasson M.J."/>
            <person name="Griffin A.M."/>
        </authorList>
    </citation>
    <scope>NUCLEOTIDE SEQUENCE [GENOMIC DNA]</scope>
    <source>
        <strain>ATCC BAA-250 / LMG 18311</strain>
    </source>
</reference>
<reference key="2">
    <citation type="journal article" date="2005" name="PLoS Comput. Biol.">
        <title>Stealth proteins: in silico identification of a novel protein family rendering bacterial pathogens invisible to host immune defense.</title>
        <authorList>
            <person name="Sperisen P."/>
            <person name="Schmid C.D."/>
            <person name="Bucher P."/>
            <person name="Zilian O."/>
        </authorList>
    </citation>
    <scope>IDENTIFICATION AS A STEALTH PROTEIN</scope>
    <scope>PREDICTION OF FUNCTION</scope>
</reference>
<organism>
    <name type="scientific">Streptococcus thermophilus</name>
    <dbReference type="NCBI Taxonomy" id="1308"/>
    <lineage>
        <taxon>Bacteria</taxon>
        <taxon>Bacillati</taxon>
        <taxon>Bacillota</taxon>
        <taxon>Bacilli</taxon>
        <taxon>Lactobacillales</taxon>
        <taxon>Streptococcaceae</taxon>
        <taxon>Streptococcus</taxon>
    </lineage>
</organism>
<comment type="miscellaneous">
    <text>Stealth proteins are part of a protein family that is conserved from bacteria to higher eukaryotes. Family members were first identified in microbes as proteins that help pathogens to elude the host innate immune system. Microbial stealth proteins are involved in the biosynthesis of exopolysaccharides. Stealth proteins are predicted to function as hexose-1-phosphoryltransferases.</text>
</comment>
<comment type="similarity">
    <text evidence="1">Belongs to the stealth family.</text>
</comment>
<proteinExistence type="inferred from homology"/>
<dbReference type="EC" id="2.7.-.-"/>
<dbReference type="EMBL" id="Y17900">
    <property type="protein sequence ID" value="CAC18360.1"/>
    <property type="molecule type" value="Genomic_DNA"/>
</dbReference>
<dbReference type="SMR" id="Q9EVX1"/>
<dbReference type="GO" id="GO:0016772">
    <property type="term" value="F:transferase activity, transferring phosphorus-containing groups"/>
    <property type="evidence" value="ECO:0007669"/>
    <property type="project" value="InterPro"/>
</dbReference>
<dbReference type="GO" id="GO:0000271">
    <property type="term" value="P:polysaccharide biosynthetic process"/>
    <property type="evidence" value="ECO:0007669"/>
    <property type="project" value="UniProtKB-KW"/>
</dbReference>
<dbReference type="InterPro" id="IPR047141">
    <property type="entry name" value="Stealth"/>
</dbReference>
<dbReference type="InterPro" id="IPR031358">
    <property type="entry name" value="Stealth_CR1"/>
</dbReference>
<dbReference type="InterPro" id="IPR021520">
    <property type="entry name" value="Stealth_CR2"/>
</dbReference>
<dbReference type="PANTHER" id="PTHR24045">
    <property type="match status" value="1"/>
</dbReference>
<dbReference type="PANTHER" id="PTHR24045:SF0">
    <property type="entry name" value="N-ACETYLGLUCOSAMINE-1-PHOSPHOTRANSFERASE SUBUNITS ALPHA_BETA"/>
    <property type="match status" value="1"/>
</dbReference>
<dbReference type="Pfam" id="PF17101">
    <property type="entry name" value="Stealth_CR1"/>
    <property type="match status" value="1"/>
</dbReference>
<dbReference type="Pfam" id="PF11380">
    <property type="entry name" value="Stealth_CR2"/>
    <property type="match status" value="1"/>
</dbReference>
<accession>Q9EVX1</accession>
<gene>
    <name type="primary">cpsJ</name>
</gene>
<sequence>MDFVVLWVDGNDPEFIREKNKYTPHNRKIDNDEDNVHRYRDYGTFNYWFRMVERHAPWVNNIYLITNGQRPKWLNVNHPKLKWVRHEEFIPKEYLPIFNASAIEMNIHRIDGLSENFVLFNDDMYLIQDVKYSDFFVNEKPKLLAIYEALVPWSRFSKIYFNDVLVLYRHFPNKKALRQSPFKFFNIKYGQLMLKNRLHNFHGGFTHYRNYRAKIGRHIWFFEGNFLFTSGTKCFQFI</sequence>